<name>NOP58_MYCMD</name>
<proteinExistence type="inferred from homology"/>
<evidence type="ECO:0000250" key="1"/>
<evidence type="ECO:0000255" key="2">
    <source>
        <dbReference type="PROSITE-ProRule" id="PRU00690"/>
    </source>
</evidence>
<evidence type="ECO:0000256" key="3">
    <source>
        <dbReference type="SAM" id="MobiDB-lite"/>
    </source>
</evidence>
<evidence type="ECO:0000305" key="4"/>
<organism>
    <name type="scientific">Mycosarcoma maydis</name>
    <name type="common">Corn smut fungus</name>
    <name type="synonym">Ustilago maydis</name>
    <dbReference type="NCBI Taxonomy" id="5270"/>
    <lineage>
        <taxon>Eukaryota</taxon>
        <taxon>Fungi</taxon>
        <taxon>Dikarya</taxon>
        <taxon>Basidiomycota</taxon>
        <taxon>Ustilaginomycotina</taxon>
        <taxon>Ustilaginomycetes</taxon>
        <taxon>Ustilaginales</taxon>
        <taxon>Ustilaginaceae</taxon>
        <taxon>Mycosarcoma</taxon>
    </lineage>
</organism>
<comment type="function">
    <text evidence="1">Required for pre-18S rRNA processing. May bind microtubules (By similarity).</text>
</comment>
<comment type="subcellular location">
    <subcellularLocation>
        <location evidence="1">Nucleus</location>
        <location evidence="1">Nucleolus</location>
    </subcellularLocation>
</comment>
<comment type="similarity">
    <text evidence="4">Belongs to the NOP5/NOP56 family.</text>
</comment>
<protein>
    <recommendedName>
        <fullName>Nucleolar protein 58</fullName>
    </recommendedName>
</protein>
<accession>Q4PBF2</accession>
<accession>A0A0D1CRI5</accession>
<sequence length="582" mass="63155">MVKVLFETAVGFCLFNVSDSSKLEATKNLHESLDSAEGASNLLKLSAIHRFTNTAEAVEDISAINEGKMSKSLKKFLTDEIVEGKGKEKENLIVAESKLASNIAKKLGIQVTYDSELLDLYRGIRENLATLLSSSSGDESLDPRDLNTMSLGLSHSLSRYKLKFSPDKVDTMVVQAIGLLDDLDKEINIYAMRVKEWYGWHFPEMGKIITDNLAYAKVIRAMGFRTNASATDFSEILPEEIEETLKAAAEISMGTEISETDLEHIWSLCDQVISITQYRTQLYQYLQNRMAAIAPNLTALVGDLVGARLISHAGSLMNLAKHPASTVQILGAEKALFRALKTKHDTPKYGLIYHSSLVGQAPQKLKGKMARMVATKAALSIRLDALADADTKSDEGAPTVGIEARAKLESRLRALEMQSGLSGMRSARNAAGDQGHKQKGFQMEAGGRSYNAAADAAGPSDMASAANMAPSMLPSTPAKPSTTTDEEKKLSKEERKALKKARKSEIAASEPATPAAASEAGDDKLSKEERKALKKAKKDANGVETPKKEKKDKKKRSADEADVNGTPKSEPGSSKKKKSKKD</sequence>
<dbReference type="EMBL" id="CM003145">
    <property type="protein sequence ID" value="KIS69213.1"/>
    <property type="molecule type" value="Genomic_DNA"/>
</dbReference>
<dbReference type="RefSeq" id="XP_011388968.1">
    <property type="nucleotide sequence ID" value="XM_011390666.1"/>
</dbReference>
<dbReference type="SMR" id="Q4PBF2"/>
<dbReference type="FunCoup" id="Q4PBF2">
    <property type="interactions" value="769"/>
</dbReference>
<dbReference type="STRING" id="237631.Q4PBF2"/>
<dbReference type="EnsemblFungi" id="KIS69213">
    <property type="protein sequence ID" value="KIS69213"/>
    <property type="gene ID" value="UMAG_02561"/>
</dbReference>
<dbReference type="GeneID" id="23563279"/>
<dbReference type="KEGG" id="uma:UMAG_02561"/>
<dbReference type="VEuPathDB" id="FungiDB:UMAG_02561"/>
<dbReference type="eggNOG" id="KOG2572">
    <property type="taxonomic scope" value="Eukaryota"/>
</dbReference>
<dbReference type="HOGENOM" id="CLU_015495_5_2_1"/>
<dbReference type="InParanoid" id="Q4PBF2"/>
<dbReference type="OMA" id="NRMMVLA"/>
<dbReference type="OrthoDB" id="6780543at2759"/>
<dbReference type="Proteomes" id="UP000000561">
    <property type="component" value="Chromosome 6"/>
</dbReference>
<dbReference type="GO" id="GO:0031428">
    <property type="term" value="C:box C/D methylation guide snoRNP complex"/>
    <property type="evidence" value="ECO:0000318"/>
    <property type="project" value="GO_Central"/>
</dbReference>
<dbReference type="GO" id="GO:0005730">
    <property type="term" value="C:nucleolus"/>
    <property type="evidence" value="ECO:0007669"/>
    <property type="project" value="UniProtKB-SubCell"/>
</dbReference>
<dbReference type="GO" id="GO:0032040">
    <property type="term" value="C:small-subunit processome"/>
    <property type="evidence" value="ECO:0000318"/>
    <property type="project" value="GO_Central"/>
</dbReference>
<dbReference type="GO" id="GO:0030515">
    <property type="term" value="F:snoRNA binding"/>
    <property type="evidence" value="ECO:0000318"/>
    <property type="project" value="GO_Central"/>
</dbReference>
<dbReference type="GO" id="GO:0017069">
    <property type="term" value="F:snRNA binding"/>
    <property type="evidence" value="ECO:0007669"/>
    <property type="project" value="EnsemblFungi"/>
</dbReference>
<dbReference type="GO" id="GO:0000494">
    <property type="term" value="P:box C/D sno(s)RNA 3'-end processing"/>
    <property type="evidence" value="ECO:0007669"/>
    <property type="project" value="EnsemblFungi"/>
</dbReference>
<dbReference type="GO" id="GO:0000480">
    <property type="term" value="P:endonucleolytic cleavage in 5'-ETS of tricistronic rRNA transcript (SSU-rRNA, 5.8S rRNA, LSU-rRNA)"/>
    <property type="evidence" value="ECO:0007669"/>
    <property type="project" value="EnsemblFungi"/>
</dbReference>
<dbReference type="GO" id="GO:0000447">
    <property type="term" value="P:endonucleolytic cleavage in ITS1 to separate SSU-rRNA from 5.8S rRNA and LSU-rRNA from tricistronic rRNA transcript (SSU-rRNA, 5.8S rRNA, LSU-rRNA)"/>
    <property type="evidence" value="ECO:0007669"/>
    <property type="project" value="EnsemblFungi"/>
</dbReference>
<dbReference type="GO" id="GO:0000472">
    <property type="term" value="P:endonucleolytic cleavage to generate mature 5'-end of SSU-rRNA from (SSU-rRNA, 5.8S rRNA, LSU-rRNA)"/>
    <property type="evidence" value="ECO:0007669"/>
    <property type="project" value="EnsemblFungi"/>
</dbReference>
<dbReference type="GO" id="GO:1902570">
    <property type="term" value="P:protein localization to nucleolus"/>
    <property type="evidence" value="ECO:0007669"/>
    <property type="project" value="EnsemblFungi"/>
</dbReference>
<dbReference type="GO" id="GO:0000452">
    <property type="term" value="P:snoRNA guided rRNA 2'-O-methylation"/>
    <property type="evidence" value="ECO:0007669"/>
    <property type="project" value="EnsemblFungi"/>
</dbReference>
<dbReference type="FunFam" id="1.10.246.90:FF:000003">
    <property type="entry name" value="Nucleolar protein 58"/>
    <property type="match status" value="1"/>
</dbReference>
<dbReference type="FunFam" id="1.10.287.4070:FF:000001">
    <property type="entry name" value="Probable Nucleolar protein 58"/>
    <property type="match status" value="1"/>
</dbReference>
<dbReference type="Gene3D" id="1.10.287.4070">
    <property type="match status" value="1"/>
</dbReference>
<dbReference type="Gene3D" id="1.10.246.90">
    <property type="entry name" value="Nop domain"/>
    <property type="match status" value="1"/>
</dbReference>
<dbReference type="InterPro" id="IPR045056">
    <property type="entry name" value="Nop56/Nop58"/>
</dbReference>
<dbReference type="InterPro" id="IPR012974">
    <property type="entry name" value="NOP58/56_N"/>
</dbReference>
<dbReference type="InterPro" id="IPR042239">
    <property type="entry name" value="Nop_C"/>
</dbReference>
<dbReference type="InterPro" id="IPR002687">
    <property type="entry name" value="Nop_dom"/>
</dbReference>
<dbReference type="InterPro" id="IPR036070">
    <property type="entry name" value="Nop_dom_sf"/>
</dbReference>
<dbReference type="InterPro" id="IPR012976">
    <property type="entry name" value="NOSIC"/>
</dbReference>
<dbReference type="PANTHER" id="PTHR10894">
    <property type="entry name" value="NUCLEOLAR PROTEIN 5 NUCLEOLAR PROTEIN NOP5 NOP58"/>
    <property type="match status" value="1"/>
</dbReference>
<dbReference type="PANTHER" id="PTHR10894:SF1">
    <property type="entry name" value="NUCLEOLAR PROTEIN 58"/>
    <property type="match status" value="1"/>
</dbReference>
<dbReference type="Pfam" id="PF01798">
    <property type="entry name" value="Nop"/>
    <property type="match status" value="1"/>
</dbReference>
<dbReference type="Pfam" id="PF08156">
    <property type="entry name" value="NOP5NT"/>
    <property type="match status" value="1"/>
</dbReference>
<dbReference type="SMART" id="SM00931">
    <property type="entry name" value="NOSIC"/>
    <property type="match status" value="1"/>
</dbReference>
<dbReference type="SUPFAM" id="SSF89124">
    <property type="entry name" value="Nop domain"/>
    <property type="match status" value="1"/>
</dbReference>
<dbReference type="PROSITE" id="PS51358">
    <property type="entry name" value="NOP"/>
    <property type="match status" value="1"/>
</dbReference>
<reference key="1">
    <citation type="journal article" date="2006" name="Nature">
        <title>Insights from the genome of the biotrophic fungal plant pathogen Ustilago maydis.</title>
        <authorList>
            <person name="Kaemper J."/>
            <person name="Kahmann R."/>
            <person name="Boelker M."/>
            <person name="Ma L.-J."/>
            <person name="Brefort T."/>
            <person name="Saville B.J."/>
            <person name="Banuett F."/>
            <person name="Kronstad J.W."/>
            <person name="Gold S.E."/>
            <person name="Mueller O."/>
            <person name="Perlin M.H."/>
            <person name="Woesten H.A.B."/>
            <person name="de Vries R."/>
            <person name="Ruiz-Herrera J."/>
            <person name="Reynaga-Pena C.G."/>
            <person name="Snetselaar K."/>
            <person name="McCann M."/>
            <person name="Perez-Martin J."/>
            <person name="Feldbruegge M."/>
            <person name="Basse C.W."/>
            <person name="Steinberg G."/>
            <person name="Ibeas J.I."/>
            <person name="Holloman W."/>
            <person name="Guzman P."/>
            <person name="Farman M.L."/>
            <person name="Stajich J.E."/>
            <person name="Sentandreu R."/>
            <person name="Gonzalez-Prieto J.M."/>
            <person name="Kennell J.C."/>
            <person name="Molina L."/>
            <person name="Schirawski J."/>
            <person name="Mendoza-Mendoza A."/>
            <person name="Greilinger D."/>
            <person name="Muench K."/>
            <person name="Roessel N."/>
            <person name="Scherer M."/>
            <person name="Vranes M."/>
            <person name="Ladendorf O."/>
            <person name="Vincon V."/>
            <person name="Fuchs U."/>
            <person name="Sandrock B."/>
            <person name="Meng S."/>
            <person name="Ho E.C.H."/>
            <person name="Cahill M.J."/>
            <person name="Boyce K.J."/>
            <person name="Klose J."/>
            <person name="Klosterman S.J."/>
            <person name="Deelstra H.J."/>
            <person name="Ortiz-Castellanos L."/>
            <person name="Li W."/>
            <person name="Sanchez-Alonso P."/>
            <person name="Schreier P.H."/>
            <person name="Haeuser-Hahn I."/>
            <person name="Vaupel M."/>
            <person name="Koopmann E."/>
            <person name="Friedrich G."/>
            <person name="Voss H."/>
            <person name="Schlueter T."/>
            <person name="Margolis J."/>
            <person name="Platt D."/>
            <person name="Swimmer C."/>
            <person name="Gnirke A."/>
            <person name="Chen F."/>
            <person name="Vysotskaia V."/>
            <person name="Mannhaupt G."/>
            <person name="Gueldener U."/>
            <person name="Muensterkoetter M."/>
            <person name="Haase D."/>
            <person name="Oesterheld M."/>
            <person name="Mewes H.-W."/>
            <person name="Mauceli E.W."/>
            <person name="DeCaprio D."/>
            <person name="Wade C.M."/>
            <person name="Butler J."/>
            <person name="Young S.K."/>
            <person name="Jaffe D.B."/>
            <person name="Calvo S.E."/>
            <person name="Nusbaum C."/>
            <person name="Galagan J.E."/>
            <person name="Birren B.W."/>
        </authorList>
    </citation>
    <scope>NUCLEOTIDE SEQUENCE [LARGE SCALE GENOMIC DNA]</scope>
    <source>
        <strain>DSM 14603 / FGSC 9021 / UM521</strain>
    </source>
</reference>
<reference key="2">
    <citation type="submission" date="2014-09" db="EMBL/GenBank/DDBJ databases">
        <authorList>
            <person name="Gueldener U."/>
            <person name="Muensterkoetter M."/>
            <person name="Walter M.C."/>
            <person name="Mannhaupt G."/>
            <person name="Kahmann R."/>
        </authorList>
    </citation>
    <scope>GENOME REANNOTATION</scope>
    <source>
        <strain>DSM 14603 / FGSC 9021 / UM521</strain>
    </source>
</reference>
<keyword id="KW-0539">Nucleus</keyword>
<keyword id="KW-1185">Reference proteome</keyword>
<keyword id="KW-0687">Ribonucleoprotein</keyword>
<keyword id="KW-0690">Ribosome biogenesis</keyword>
<keyword id="KW-0698">rRNA processing</keyword>
<gene>
    <name type="primary">NOP58</name>
    <name type="ORF">UMAG_02561</name>
</gene>
<feature type="chain" id="PRO_0000350993" description="Nucleolar protein 58">
    <location>
        <begin position="1"/>
        <end position="582"/>
    </location>
</feature>
<feature type="domain" description="Nop" evidence="2">
    <location>
        <begin position="293"/>
        <end position="417"/>
    </location>
</feature>
<feature type="region of interest" description="Disordered" evidence="3">
    <location>
        <begin position="461"/>
        <end position="582"/>
    </location>
</feature>
<feature type="compositionally biased region" description="Basic and acidic residues" evidence="3">
    <location>
        <begin position="485"/>
        <end position="496"/>
    </location>
</feature>
<feature type="compositionally biased region" description="Low complexity" evidence="3">
    <location>
        <begin position="507"/>
        <end position="519"/>
    </location>
</feature>
<feature type="compositionally biased region" description="Basic and acidic residues" evidence="3">
    <location>
        <begin position="521"/>
        <end position="531"/>
    </location>
</feature>
<feature type="compositionally biased region" description="Basic and acidic residues" evidence="3">
    <location>
        <begin position="538"/>
        <end position="549"/>
    </location>
</feature>